<gene>
    <name evidence="1" type="primary">clpX</name>
    <name type="ordered locus">SDY_0294</name>
</gene>
<accession>Q32JJ4</accession>
<evidence type="ECO:0000255" key="1">
    <source>
        <dbReference type="HAMAP-Rule" id="MF_00175"/>
    </source>
</evidence>
<evidence type="ECO:0000255" key="2">
    <source>
        <dbReference type="PROSITE-ProRule" id="PRU01250"/>
    </source>
</evidence>
<feature type="chain" id="PRO_1000024661" description="ATP-dependent Clp protease ATP-binding subunit ClpX">
    <location>
        <begin position="1"/>
        <end position="424"/>
    </location>
</feature>
<feature type="domain" description="ClpX-type ZB" evidence="2">
    <location>
        <begin position="2"/>
        <end position="56"/>
    </location>
</feature>
<feature type="binding site" evidence="2">
    <location>
        <position position="15"/>
    </location>
    <ligand>
        <name>Zn(2+)</name>
        <dbReference type="ChEBI" id="CHEBI:29105"/>
    </ligand>
</feature>
<feature type="binding site" evidence="2">
    <location>
        <position position="18"/>
    </location>
    <ligand>
        <name>Zn(2+)</name>
        <dbReference type="ChEBI" id="CHEBI:29105"/>
    </ligand>
</feature>
<feature type="binding site" evidence="2">
    <location>
        <position position="37"/>
    </location>
    <ligand>
        <name>Zn(2+)</name>
        <dbReference type="ChEBI" id="CHEBI:29105"/>
    </ligand>
</feature>
<feature type="binding site" evidence="2">
    <location>
        <position position="40"/>
    </location>
    <ligand>
        <name>Zn(2+)</name>
        <dbReference type="ChEBI" id="CHEBI:29105"/>
    </ligand>
</feature>
<feature type="binding site" evidence="1">
    <location>
        <begin position="120"/>
        <end position="127"/>
    </location>
    <ligand>
        <name>ATP</name>
        <dbReference type="ChEBI" id="CHEBI:30616"/>
    </ligand>
</feature>
<proteinExistence type="inferred from homology"/>
<name>CLPX_SHIDS</name>
<sequence>MTDKRKDGSGKLLYCSFCGKSQHEVRKLIAGPSVYICDECVDLCNDIIREEIKEVAPHRERSALPTPHEIRNHLDDYVIGQEQAKKVLAVAVYNHYKRLRNGDTSNGVELGKSNILLIGPTGSGKTLLAETLARLLDVPFTMADATTLTEAGYVGEDVENIIQKLLQKCDYDVQKAQRGIVYIDEIDKISRKSDNPSITRDVSGEGVQQALLKLIEGTVAAVPPQGGRKHPQQEFLQVDTSKILFICGGAFAGLDKVISHRVETGSGIGFGATVKAKSDKASEGELLAQVEPEDLIKFGLIPEFIGRLPVVATLNELSEEALIQILKEPKNALTKQYQALFNLEGVDLEFRDEALDAIAKKAMARKTGARGLRSIVEAALLDTMYDLPSMEDVEKVVIDESVIDGQSKPLLIYGKPEAQQASGE</sequence>
<protein>
    <recommendedName>
        <fullName evidence="1">ATP-dependent Clp protease ATP-binding subunit ClpX</fullName>
    </recommendedName>
</protein>
<comment type="function">
    <text evidence="1">ATP-dependent specificity component of the Clp protease. It directs the protease to specific substrates. Can perform chaperone functions in the absence of ClpP.</text>
</comment>
<comment type="subunit">
    <text evidence="1">Component of the ClpX-ClpP complex. Forms a hexameric ring that, in the presence of ATP, binds to fourteen ClpP subunits assembled into a disk-like structure with a central cavity, resembling the structure of eukaryotic proteasomes.</text>
</comment>
<comment type="similarity">
    <text evidence="1">Belongs to the ClpX chaperone family.</text>
</comment>
<organism>
    <name type="scientific">Shigella dysenteriae serotype 1 (strain Sd197)</name>
    <dbReference type="NCBI Taxonomy" id="300267"/>
    <lineage>
        <taxon>Bacteria</taxon>
        <taxon>Pseudomonadati</taxon>
        <taxon>Pseudomonadota</taxon>
        <taxon>Gammaproteobacteria</taxon>
        <taxon>Enterobacterales</taxon>
        <taxon>Enterobacteriaceae</taxon>
        <taxon>Shigella</taxon>
    </lineage>
</organism>
<dbReference type="EMBL" id="CP000034">
    <property type="protein sequence ID" value="ABB60513.1"/>
    <property type="molecule type" value="Genomic_DNA"/>
</dbReference>
<dbReference type="RefSeq" id="WP_000130305.1">
    <property type="nucleotide sequence ID" value="NC_007606.1"/>
</dbReference>
<dbReference type="RefSeq" id="YP_402002.1">
    <property type="nucleotide sequence ID" value="NC_007606.1"/>
</dbReference>
<dbReference type="SMR" id="Q32JJ4"/>
<dbReference type="STRING" id="300267.SDY_0294"/>
<dbReference type="EnsemblBacteria" id="ABB60513">
    <property type="protein sequence ID" value="ABB60513"/>
    <property type="gene ID" value="SDY_0294"/>
</dbReference>
<dbReference type="GeneID" id="93777016"/>
<dbReference type="KEGG" id="sdy:SDY_0294"/>
<dbReference type="PATRIC" id="fig|300267.13.peg.339"/>
<dbReference type="HOGENOM" id="CLU_014218_8_2_6"/>
<dbReference type="Proteomes" id="UP000002716">
    <property type="component" value="Chromosome"/>
</dbReference>
<dbReference type="GO" id="GO:0009376">
    <property type="term" value="C:HslUV protease complex"/>
    <property type="evidence" value="ECO:0007669"/>
    <property type="project" value="TreeGrafter"/>
</dbReference>
<dbReference type="GO" id="GO:0005524">
    <property type="term" value="F:ATP binding"/>
    <property type="evidence" value="ECO:0007669"/>
    <property type="project" value="UniProtKB-UniRule"/>
</dbReference>
<dbReference type="GO" id="GO:0016887">
    <property type="term" value="F:ATP hydrolysis activity"/>
    <property type="evidence" value="ECO:0007669"/>
    <property type="project" value="InterPro"/>
</dbReference>
<dbReference type="GO" id="GO:0140662">
    <property type="term" value="F:ATP-dependent protein folding chaperone"/>
    <property type="evidence" value="ECO:0007669"/>
    <property type="project" value="InterPro"/>
</dbReference>
<dbReference type="GO" id="GO:0046983">
    <property type="term" value="F:protein dimerization activity"/>
    <property type="evidence" value="ECO:0007669"/>
    <property type="project" value="InterPro"/>
</dbReference>
<dbReference type="GO" id="GO:0051082">
    <property type="term" value="F:unfolded protein binding"/>
    <property type="evidence" value="ECO:0007669"/>
    <property type="project" value="UniProtKB-UniRule"/>
</dbReference>
<dbReference type="GO" id="GO:0008270">
    <property type="term" value="F:zinc ion binding"/>
    <property type="evidence" value="ECO:0007669"/>
    <property type="project" value="InterPro"/>
</dbReference>
<dbReference type="GO" id="GO:0051301">
    <property type="term" value="P:cell division"/>
    <property type="evidence" value="ECO:0007669"/>
    <property type="project" value="TreeGrafter"/>
</dbReference>
<dbReference type="GO" id="GO:0051603">
    <property type="term" value="P:proteolysis involved in protein catabolic process"/>
    <property type="evidence" value="ECO:0007669"/>
    <property type="project" value="TreeGrafter"/>
</dbReference>
<dbReference type="CDD" id="cd19497">
    <property type="entry name" value="RecA-like_ClpX"/>
    <property type="match status" value="1"/>
</dbReference>
<dbReference type="FunFam" id="1.10.8.60:FF:000002">
    <property type="entry name" value="ATP-dependent Clp protease ATP-binding subunit ClpX"/>
    <property type="match status" value="1"/>
</dbReference>
<dbReference type="FunFam" id="3.40.50.300:FF:000005">
    <property type="entry name" value="ATP-dependent Clp protease ATP-binding subunit ClpX"/>
    <property type="match status" value="1"/>
</dbReference>
<dbReference type="Gene3D" id="1.10.8.60">
    <property type="match status" value="1"/>
</dbReference>
<dbReference type="Gene3D" id="6.20.220.10">
    <property type="entry name" value="ClpX chaperone, C4-type zinc finger domain"/>
    <property type="match status" value="1"/>
</dbReference>
<dbReference type="Gene3D" id="3.40.50.300">
    <property type="entry name" value="P-loop containing nucleotide triphosphate hydrolases"/>
    <property type="match status" value="1"/>
</dbReference>
<dbReference type="HAMAP" id="MF_00175">
    <property type="entry name" value="ClpX"/>
    <property type="match status" value="1"/>
</dbReference>
<dbReference type="InterPro" id="IPR003593">
    <property type="entry name" value="AAA+_ATPase"/>
</dbReference>
<dbReference type="InterPro" id="IPR050052">
    <property type="entry name" value="ATP-dep_Clp_protease_ClpX"/>
</dbReference>
<dbReference type="InterPro" id="IPR003959">
    <property type="entry name" value="ATPase_AAA_core"/>
</dbReference>
<dbReference type="InterPro" id="IPR019489">
    <property type="entry name" value="Clp_ATPase_C"/>
</dbReference>
<dbReference type="InterPro" id="IPR004487">
    <property type="entry name" value="Clp_protease_ATP-bd_su_ClpX"/>
</dbReference>
<dbReference type="InterPro" id="IPR046425">
    <property type="entry name" value="ClpX_bact"/>
</dbReference>
<dbReference type="InterPro" id="IPR027417">
    <property type="entry name" value="P-loop_NTPase"/>
</dbReference>
<dbReference type="InterPro" id="IPR010603">
    <property type="entry name" value="Znf_CppX_C4"/>
</dbReference>
<dbReference type="InterPro" id="IPR038366">
    <property type="entry name" value="Znf_CppX_C4_sf"/>
</dbReference>
<dbReference type="NCBIfam" id="TIGR00382">
    <property type="entry name" value="clpX"/>
    <property type="match status" value="1"/>
</dbReference>
<dbReference type="NCBIfam" id="NF003745">
    <property type="entry name" value="PRK05342.1"/>
    <property type="match status" value="1"/>
</dbReference>
<dbReference type="PANTHER" id="PTHR48102:SF7">
    <property type="entry name" value="ATP-DEPENDENT CLP PROTEASE ATP-BINDING SUBUNIT CLPX-LIKE, MITOCHONDRIAL"/>
    <property type="match status" value="1"/>
</dbReference>
<dbReference type="PANTHER" id="PTHR48102">
    <property type="entry name" value="ATP-DEPENDENT CLP PROTEASE ATP-BINDING SUBUNIT CLPX-LIKE, MITOCHONDRIAL-RELATED"/>
    <property type="match status" value="1"/>
</dbReference>
<dbReference type="Pfam" id="PF07724">
    <property type="entry name" value="AAA_2"/>
    <property type="match status" value="1"/>
</dbReference>
<dbReference type="Pfam" id="PF10431">
    <property type="entry name" value="ClpB_D2-small"/>
    <property type="match status" value="1"/>
</dbReference>
<dbReference type="Pfam" id="PF06689">
    <property type="entry name" value="zf-C4_ClpX"/>
    <property type="match status" value="1"/>
</dbReference>
<dbReference type="SMART" id="SM00382">
    <property type="entry name" value="AAA"/>
    <property type="match status" value="1"/>
</dbReference>
<dbReference type="SMART" id="SM01086">
    <property type="entry name" value="ClpB_D2-small"/>
    <property type="match status" value="1"/>
</dbReference>
<dbReference type="SMART" id="SM00994">
    <property type="entry name" value="zf-C4_ClpX"/>
    <property type="match status" value="1"/>
</dbReference>
<dbReference type="SUPFAM" id="SSF57716">
    <property type="entry name" value="Glucocorticoid receptor-like (DNA-binding domain)"/>
    <property type="match status" value="1"/>
</dbReference>
<dbReference type="SUPFAM" id="SSF52540">
    <property type="entry name" value="P-loop containing nucleoside triphosphate hydrolases"/>
    <property type="match status" value="1"/>
</dbReference>
<dbReference type="PROSITE" id="PS51902">
    <property type="entry name" value="CLPX_ZB"/>
    <property type="match status" value="1"/>
</dbReference>
<reference key="1">
    <citation type="journal article" date="2005" name="Nucleic Acids Res.">
        <title>Genome dynamics and diversity of Shigella species, the etiologic agents of bacillary dysentery.</title>
        <authorList>
            <person name="Yang F."/>
            <person name="Yang J."/>
            <person name="Zhang X."/>
            <person name="Chen L."/>
            <person name="Jiang Y."/>
            <person name="Yan Y."/>
            <person name="Tang X."/>
            <person name="Wang J."/>
            <person name="Xiong Z."/>
            <person name="Dong J."/>
            <person name="Xue Y."/>
            <person name="Zhu Y."/>
            <person name="Xu X."/>
            <person name="Sun L."/>
            <person name="Chen S."/>
            <person name="Nie H."/>
            <person name="Peng J."/>
            <person name="Xu J."/>
            <person name="Wang Y."/>
            <person name="Yuan Z."/>
            <person name="Wen Y."/>
            <person name="Yao Z."/>
            <person name="Shen Y."/>
            <person name="Qiang B."/>
            <person name="Hou Y."/>
            <person name="Yu J."/>
            <person name="Jin Q."/>
        </authorList>
    </citation>
    <scope>NUCLEOTIDE SEQUENCE [LARGE SCALE GENOMIC DNA]</scope>
    <source>
        <strain>Sd197</strain>
    </source>
</reference>
<keyword id="KW-0067">ATP-binding</keyword>
<keyword id="KW-0143">Chaperone</keyword>
<keyword id="KW-0479">Metal-binding</keyword>
<keyword id="KW-0547">Nucleotide-binding</keyword>
<keyword id="KW-1185">Reference proteome</keyword>
<keyword id="KW-0862">Zinc</keyword>